<protein>
    <recommendedName>
        <fullName evidence="1">Ribonuclease T</fullName>
        <ecNumber evidence="1">3.1.13.-</ecNumber>
    </recommendedName>
    <alternativeName>
        <fullName evidence="1">Exoribonuclease T</fullName>
        <shortName evidence="1">RNase T</shortName>
    </alternativeName>
</protein>
<reference key="1">
    <citation type="journal article" date="2000" name="Nature">
        <title>Genome sequence of the endocellular bacterial symbiont of aphids Buchnera sp. APS.</title>
        <authorList>
            <person name="Shigenobu S."/>
            <person name="Watanabe H."/>
            <person name="Hattori M."/>
            <person name="Sakaki Y."/>
            <person name="Ishikawa H."/>
        </authorList>
    </citation>
    <scope>NUCLEOTIDE SEQUENCE [LARGE SCALE GENOMIC DNA]</scope>
    <source>
        <strain>APS</strain>
    </source>
</reference>
<sequence>MSTNQEFNLLSNRFRTFYPVVIDIETAGFNANTDAVLEIAIITLKMDELGWLHKEDTLHFHIEPFKGSIINSDAIAFNKIDPFNPLRGAISEKIAIQSILKKVRNGIKIQGCSRGIVVAHNANFDHNFLMAAIQRVKIKNNPFHPFATFDTAALSGLVVGQTVLSKACKAIGLSFDNHQAHSALYDTLQTANLFCELVNRWKRLGGWPVDIKKNNSTSNKY</sequence>
<evidence type="ECO:0000255" key="1">
    <source>
        <dbReference type="HAMAP-Rule" id="MF_00157"/>
    </source>
</evidence>
<feature type="chain" id="PRO_0000208956" description="Ribonuclease T">
    <location>
        <begin position="1"/>
        <end position="221"/>
    </location>
</feature>
<feature type="domain" description="Exonuclease" evidence="1">
    <location>
        <begin position="20"/>
        <end position="194"/>
    </location>
</feature>
<feature type="active site" description="Proton donor/acceptor" evidence="1">
    <location>
        <position position="181"/>
    </location>
</feature>
<feature type="binding site" evidence="1">
    <location>
        <position position="23"/>
    </location>
    <ligand>
        <name>Mg(2+)</name>
        <dbReference type="ChEBI" id="CHEBI:18420"/>
        <label>1</label>
        <note>catalytic</note>
    </ligand>
</feature>
<feature type="binding site" evidence="1">
    <location>
        <position position="23"/>
    </location>
    <ligand>
        <name>Mg(2+)</name>
        <dbReference type="ChEBI" id="CHEBI:18420"/>
        <label>2</label>
        <note>catalytic</note>
    </ligand>
</feature>
<feature type="binding site" evidence="1">
    <location>
        <position position="25"/>
    </location>
    <ligand>
        <name>Mg(2+)</name>
        <dbReference type="ChEBI" id="CHEBI:18420"/>
        <label>2</label>
        <note>catalytic</note>
    </ligand>
</feature>
<feature type="binding site" evidence="1">
    <location>
        <position position="181"/>
    </location>
    <ligand>
        <name>Mg(2+)</name>
        <dbReference type="ChEBI" id="CHEBI:18420"/>
        <label>2</label>
        <note>catalytic</note>
    </ligand>
</feature>
<feature type="binding site" evidence="1">
    <location>
        <position position="186"/>
    </location>
    <ligand>
        <name>Mg(2+)</name>
        <dbReference type="ChEBI" id="CHEBI:18420"/>
        <label>2</label>
        <note>catalytic</note>
    </ligand>
</feature>
<feature type="site" description="Important for substrate binding and specificity" evidence="1">
    <location>
        <position position="29"/>
    </location>
</feature>
<feature type="site" description="Important for substrate binding and specificity" evidence="1">
    <location>
        <position position="77"/>
    </location>
</feature>
<feature type="site" description="Important for substrate binding and specificity" evidence="1">
    <location>
        <position position="124"/>
    </location>
</feature>
<feature type="site" description="Important for substrate binding and specificity" evidence="1">
    <location>
        <position position="146"/>
    </location>
</feature>
<proteinExistence type="inferred from homology"/>
<dbReference type="EC" id="3.1.13.-" evidence="1"/>
<dbReference type="EMBL" id="BA000003">
    <property type="protein sequence ID" value="BAB12905.1"/>
    <property type="molecule type" value="Genomic_DNA"/>
</dbReference>
<dbReference type="RefSeq" id="NP_240019.1">
    <property type="nucleotide sequence ID" value="NC_002528.1"/>
</dbReference>
<dbReference type="RefSeq" id="WP_009874145.1">
    <property type="nucleotide sequence ID" value="NZ_AP036055.1"/>
</dbReference>
<dbReference type="SMR" id="P57285"/>
<dbReference type="STRING" id="563178.BUAP5A_185"/>
<dbReference type="EnsemblBacteria" id="BAB12905">
    <property type="protein sequence ID" value="BAB12905"/>
    <property type="gene ID" value="BAB12905"/>
</dbReference>
<dbReference type="KEGG" id="buc:BU188"/>
<dbReference type="PATRIC" id="fig|107806.10.peg.199"/>
<dbReference type="eggNOG" id="COG0847">
    <property type="taxonomic scope" value="Bacteria"/>
</dbReference>
<dbReference type="HOGENOM" id="CLU_082724_0_0_6"/>
<dbReference type="Proteomes" id="UP000001806">
    <property type="component" value="Chromosome"/>
</dbReference>
<dbReference type="GO" id="GO:0005829">
    <property type="term" value="C:cytosol"/>
    <property type="evidence" value="ECO:0007669"/>
    <property type="project" value="TreeGrafter"/>
</dbReference>
<dbReference type="GO" id="GO:0008408">
    <property type="term" value="F:3'-5' exonuclease activity"/>
    <property type="evidence" value="ECO:0007669"/>
    <property type="project" value="TreeGrafter"/>
</dbReference>
<dbReference type="GO" id="GO:0000287">
    <property type="term" value="F:magnesium ion binding"/>
    <property type="evidence" value="ECO:0007669"/>
    <property type="project" value="UniProtKB-UniRule"/>
</dbReference>
<dbReference type="GO" id="GO:0003676">
    <property type="term" value="F:nucleic acid binding"/>
    <property type="evidence" value="ECO:0007669"/>
    <property type="project" value="InterPro"/>
</dbReference>
<dbReference type="GO" id="GO:0016896">
    <property type="term" value="F:RNA exonuclease activity, producing 5'-phosphomonoesters"/>
    <property type="evidence" value="ECO:0007669"/>
    <property type="project" value="UniProtKB-UniRule"/>
</dbReference>
<dbReference type="GO" id="GO:0045004">
    <property type="term" value="P:DNA replication proofreading"/>
    <property type="evidence" value="ECO:0007669"/>
    <property type="project" value="TreeGrafter"/>
</dbReference>
<dbReference type="GO" id="GO:0008033">
    <property type="term" value="P:tRNA processing"/>
    <property type="evidence" value="ECO:0007669"/>
    <property type="project" value="UniProtKB-KW"/>
</dbReference>
<dbReference type="FunFam" id="3.30.420.10:FF:000009">
    <property type="entry name" value="Ribonuclease T"/>
    <property type="match status" value="1"/>
</dbReference>
<dbReference type="Gene3D" id="3.30.420.10">
    <property type="entry name" value="Ribonuclease H-like superfamily/Ribonuclease H"/>
    <property type="match status" value="1"/>
</dbReference>
<dbReference type="HAMAP" id="MF_00157">
    <property type="entry name" value="RNase_T"/>
    <property type="match status" value="1"/>
</dbReference>
<dbReference type="InterPro" id="IPR013520">
    <property type="entry name" value="Exonuclease_RNaseT/DNA_pol3"/>
</dbReference>
<dbReference type="InterPro" id="IPR005987">
    <property type="entry name" value="RNase_T"/>
</dbReference>
<dbReference type="InterPro" id="IPR012337">
    <property type="entry name" value="RNaseH-like_sf"/>
</dbReference>
<dbReference type="InterPro" id="IPR036397">
    <property type="entry name" value="RNaseH_sf"/>
</dbReference>
<dbReference type="NCBIfam" id="TIGR01298">
    <property type="entry name" value="RNaseT"/>
    <property type="match status" value="1"/>
</dbReference>
<dbReference type="PANTHER" id="PTHR30231">
    <property type="entry name" value="DNA POLYMERASE III SUBUNIT EPSILON"/>
    <property type="match status" value="1"/>
</dbReference>
<dbReference type="PANTHER" id="PTHR30231:SF2">
    <property type="entry name" value="RIBONUCLEASE T"/>
    <property type="match status" value="1"/>
</dbReference>
<dbReference type="Pfam" id="PF00929">
    <property type="entry name" value="RNase_T"/>
    <property type="match status" value="1"/>
</dbReference>
<dbReference type="SMART" id="SM00479">
    <property type="entry name" value="EXOIII"/>
    <property type="match status" value="1"/>
</dbReference>
<dbReference type="SUPFAM" id="SSF53098">
    <property type="entry name" value="Ribonuclease H-like"/>
    <property type="match status" value="1"/>
</dbReference>
<gene>
    <name evidence="1" type="primary">rnt</name>
    <name type="ordered locus">BU188</name>
</gene>
<keyword id="KW-0269">Exonuclease</keyword>
<keyword id="KW-0378">Hydrolase</keyword>
<keyword id="KW-0460">Magnesium</keyword>
<keyword id="KW-0479">Metal-binding</keyword>
<keyword id="KW-0540">Nuclease</keyword>
<keyword id="KW-1185">Reference proteome</keyword>
<keyword id="KW-0819">tRNA processing</keyword>
<name>RNT_BUCAI</name>
<accession>P57285</accession>
<organism>
    <name type="scientific">Buchnera aphidicola subsp. Acyrthosiphon pisum (strain APS)</name>
    <name type="common">Acyrthosiphon pisum symbiotic bacterium</name>
    <dbReference type="NCBI Taxonomy" id="107806"/>
    <lineage>
        <taxon>Bacteria</taxon>
        <taxon>Pseudomonadati</taxon>
        <taxon>Pseudomonadota</taxon>
        <taxon>Gammaproteobacteria</taxon>
        <taxon>Enterobacterales</taxon>
        <taxon>Erwiniaceae</taxon>
        <taxon>Buchnera</taxon>
    </lineage>
</organism>
<comment type="function">
    <text evidence="1">Trims short 3' overhangs of a variety of RNA species, leaving a one or two nucleotide 3' overhang. Responsible for the end-turnover of tRNA: specifically removes the terminal AMP residue from uncharged tRNA (tRNA-C-C-A). Also appears to be involved in tRNA biosynthesis.</text>
</comment>
<comment type="cofactor">
    <cofactor evidence="1">
        <name>Mg(2+)</name>
        <dbReference type="ChEBI" id="CHEBI:18420"/>
    </cofactor>
    <text evidence="1">Binds two Mg(2+) per subunit. The active form of the enzyme binds two Mg(2+) ions in its active site. The first Mg(2+) forms only one salt bridge with the protein.</text>
</comment>
<comment type="subunit">
    <text evidence="1">Homodimer.</text>
</comment>
<comment type="similarity">
    <text evidence="1">Belongs to the RNase T family.</text>
</comment>